<evidence type="ECO:0000250" key="1"/>
<evidence type="ECO:0000255" key="2">
    <source>
        <dbReference type="PROSITE-ProRule" id="PRU00176"/>
    </source>
</evidence>
<evidence type="ECO:0000256" key="3">
    <source>
        <dbReference type="SAM" id="MobiDB-lite"/>
    </source>
</evidence>
<evidence type="ECO:0000305" key="4"/>
<keyword id="KW-0010">Activator</keyword>
<keyword id="KW-0963">Cytoplasm</keyword>
<keyword id="KW-0507">mRNA processing</keyword>
<keyword id="KW-0508">mRNA splicing</keyword>
<keyword id="KW-0539">Nucleus</keyword>
<keyword id="KW-1185">Reference proteome</keyword>
<keyword id="KW-0677">Repeat</keyword>
<keyword id="KW-0694">RNA-binding</keyword>
<protein>
    <recommendedName>
        <fullName>CUGBP Elav-like family member 4</fullName>
        <shortName>CELF-4</shortName>
    </recommendedName>
    <alternativeName>
        <fullName>Bruno-like protein 4</fullName>
    </alternativeName>
    <alternativeName>
        <fullName>CUG-BP- and ETR-3-like factor 4</fullName>
    </alternativeName>
    <alternativeName>
        <fullName>RNA-binding protein BRUNOL-4</fullName>
    </alternativeName>
</protein>
<feature type="chain" id="PRO_0000295222" description="CUGBP Elav-like family member 4">
    <location>
        <begin position="1"/>
        <end position="474"/>
    </location>
</feature>
<feature type="domain" description="RRM 1" evidence="2">
    <location>
        <begin position="54"/>
        <end position="135"/>
    </location>
</feature>
<feature type="domain" description="RRM 2" evidence="2">
    <location>
        <begin position="141"/>
        <end position="221"/>
    </location>
</feature>
<feature type="domain" description="RRM 3" evidence="2">
    <location>
        <begin position="392"/>
        <end position="467"/>
    </location>
</feature>
<feature type="region of interest" description="Sufficient for RNA-binding and MSE-dependent splicing activity" evidence="1">
    <location>
        <begin position="1"/>
        <end position="287"/>
    </location>
</feature>
<feature type="region of interest" description="Disordered" evidence="3">
    <location>
        <begin position="18"/>
        <end position="41"/>
    </location>
</feature>
<feature type="region of interest" description="Necessary for TNNT2 exon 5 inclusion" evidence="1">
    <location>
        <begin position="228"/>
        <end position="247"/>
    </location>
</feature>
<feature type="compositionally biased region" description="Polar residues" evidence="3">
    <location>
        <begin position="18"/>
        <end position="28"/>
    </location>
</feature>
<proteinExistence type="evidence at transcript level"/>
<name>CELF4_MACFA</name>
<reference key="1">
    <citation type="submission" date="2006-10" db="EMBL/GenBank/DDBJ databases">
        <title>DNA sequences of macaque genes expressed in brain or testis and its evolutionary implications.</title>
        <authorList>
            <consortium name="International consortium for macaque cDNA sequencing and analysis"/>
        </authorList>
    </citation>
    <scope>NUCLEOTIDE SEQUENCE [LARGE SCALE MRNA]</scope>
    <source>
        <tissue>Brain cortex</tissue>
    </source>
</reference>
<gene>
    <name type="primary">CELF4</name>
    <name type="synonym">BRUNOL4</name>
    <name type="ORF">QccE-21315</name>
</gene>
<dbReference type="EMBL" id="AB169709">
    <property type="protein sequence ID" value="BAE01790.1"/>
    <property type="molecule type" value="mRNA"/>
</dbReference>
<dbReference type="RefSeq" id="NP_001306316.1">
    <property type="nucleotide sequence ID" value="NM_001319387.1"/>
</dbReference>
<dbReference type="RefSeq" id="XP_065390350.1">
    <property type="nucleotide sequence ID" value="XM_065534278.1"/>
</dbReference>
<dbReference type="SMR" id="Q4R535"/>
<dbReference type="STRING" id="9541.ENSMFAP00000022665"/>
<dbReference type="GeneID" id="101866365"/>
<dbReference type="eggNOG" id="KOG0146">
    <property type="taxonomic scope" value="Eukaryota"/>
</dbReference>
<dbReference type="Proteomes" id="UP000233100">
    <property type="component" value="Unplaced"/>
</dbReference>
<dbReference type="GO" id="GO:0005737">
    <property type="term" value="C:cytoplasm"/>
    <property type="evidence" value="ECO:0007669"/>
    <property type="project" value="UniProtKB-SubCell"/>
</dbReference>
<dbReference type="GO" id="GO:0005634">
    <property type="term" value="C:nucleus"/>
    <property type="evidence" value="ECO:0007669"/>
    <property type="project" value="UniProtKB-SubCell"/>
</dbReference>
<dbReference type="GO" id="GO:0003723">
    <property type="term" value="F:RNA binding"/>
    <property type="evidence" value="ECO:0007669"/>
    <property type="project" value="UniProtKB-KW"/>
</dbReference>
<dbReference type="GO" id="GO:0006397">
    <property type="term" value="P:mRNA processing"/>
    <property type="evidence" value="ECO:0007669"/>
    <property type="project" value="UniProtKB-KW"/>
</dbReference>
<dbReference type="GO" id="GO:0048026">
    <property type="term" value="P:positive regulation of mRNA splicing, via spliceosome"/>
    <property type="evidence" value="ECO:0000250"/>
    <property type="project" value="UniProtKB"/>
</dbReference>
<dbReference type="GO" id="GO:0008380">
    <property type="term" value="P:RNA splicing"/>
    <property type="evidence" value="ECO:0007669"/>
    <property type="project" value="UniProtKB-KW"/>
</dbReference>
<dbReference type="CDD" id="cd12632">
    <property type="entry name" value="RRM1_CELF3_4_5_6"/>
    <property type="match status" value="1"/>
</dbReference>
<dbReference type="CDD" id="cd12635">
    <property type="entry name" value="RRM2_CELF3_4_5_6"/>
    <property type="match status" value="1"/>
</dbReference>
<dbReference type="FunFam" id="3.30.70.330:FF:000007">
    <property type="entry name" value="CUGBP Elav-like family member 4 isoform 3"/>
    <property type="match status" value="1"/>
</dbReference>
<dbReference type="FunFam" id="3.30.70.330:FF:000010">
    <property type="entry name" value="CUGBP Elav-like family member 4 isoform 3"/>
    <property type="match status" value="1"/>
</dbReference>
<dbReference type="FunFam" id="3.30.70.330:FF:000140">
    <property type="entry name" value="CUGBP Elav-like family member 4 isoform 3"/>
    <property type="match status" value="1"/>
</dbReference>
<dbReference type="Gene3D" id="3.30.70.330">
    <property type="match status" value="3"/>
</dbReference>
<dbReference type="InterPro" id="IPR034648">
    <property type="entry name" value="CELF3/4/5/6_RRM1"/>
</dbReference>
<dbReference type="InterPro" id="IPR012677">
    <property type="entry name" value="Nucleotide-bd_a/b_plait_sf"/>
</dbReference>
<dbReference type="InterPro" id="IPR035979">
    <property type="entry name" value="RBD_domain_sf"/>
</dbReference>
<dbReference type="InterPro" id="IPR000504">
    <property type="entry name" value="RRM_dom"/>
</dbReference>
<dbReference type="PANTHER" id="PTHR24012">
    <property type="entry name" value="RNA BINDING PROTEIN"/>
    <property type="match status" value="1"/>
</dbReference>
<dbReference type="Pfam" id="PF00076">
    <property type="entry name" value="RRM_1"/>
    <property type="match status" value="3"/>
</dbReference>
<dbReference type="SMART" id="SM00360">
    <property type="entry name" value="RRM"/>
    <property type="match status" value="3"/>
</dbReference>
<dbReference type="SUPFAM" id="SSF54928">
    <property type="entry name" value="RNA-binding domain, RBD"/>
    <property type="match status" value="2"/>
</dbReference>
<dbReference type="PROSITE" id="PS50102">
    <property type="entry name" value="RRM"/>
    <property type="match status" value="3"/>
</dbReference>
<organism>
    <name type="scientific">Macaca fascicularis</name>
    <name type="common">Crab-eating macaque</name>
    <name type="synonym">Cynomolgus monkey</name>
    <dbReference type="NCBI Taxonomy" id="9541"/>
    <lineage>
        <taxon>Eukaryota</taxon>
        <taxon>Metazoa</taxon>
        <taxon>Chordata</taxon>
        <taxon>Craniata</taxon>
        <taxon>Vertebrata</taxon>
        <taxon>Euteleostomi</taxon>
        <taxon>Mammalia</taxon>
        <taxon>Eutheria</taxon>
        <taxon>Euarchontoglires</taxon>
        <taxon>Primates</taxon>
        <taxon>Haplorrhini</taxon>
        <taxon>Catarrhini</taxon>
        <taxon>Cercopithecidae</taxon>
        <taxon>Cercopithecinae</taxon>
        <taxon>Macaca</taxon>
    </lineage>
</organism>
<accession>Q4R535</accession>
<sequence length="474" mass="50754">MYIKMATLANGQADNASLSTNGLGSSPGSAGHMNGLSHSPGNPSTIPMKDHDAIKLFIGQIPRNLDEKDLKPLFEEFGKIYELTVLKDRFTGMHKGCAFLTYCERESALKAQSALHEQKTLPGMNRPIQVKPADSESRGDRKLFVGMLNKQQSEDDVRRLFEAFGNIEECTILRGPDGNSKGCAFVKYSSHAEAQAAINALHGSQTMPGASSSLVVKFADTDKERTMRRMQQMAGQMGMFNPMAIPFGAYGAYAQALMQQQAALMASVAQGGYLNPMAAFAAAQMQQMAALNMNGLAAAPMTPTSGGSTPPGITAPAVPSIPSPIGVNGFTGLPPQANGQPAAEAVFANGIHPYPAQSPTAADPLQQAYAGVQQYAGPAYPAAYGQISQAFPQPPPMIPQQQREGPEGCNLFIYHLPQEFGDAELMQMFLPFGFVSFDNPASAQTAIQAMNGFQIGMKRLKVQLKRPKDANRPY</sequence>
<comment type="function">
    <text evidence="1">RNA-binding protein implicated in the regulation of pre-mRNA alternative splicing. Mediates exon inclusion and/or exclusion in pre-mRNA that are subject to tissue-specific and developmentally regulated alternative splicing. Specifically activates exon 5 inclusion of cardiac isoforms of TNNT2 during heart remodeling at the juvenile to adult transition. Promotes exclusion of both the smooth muscle (SM) and non-muscle (NM) exons in actinin pre-mRNAs. Activates the splicing of MAPT/Tau exon 10. Binds to muscle-specific splicing enhancer (MSE) intronic sites flanking the alternative exon 5 of TNNT2 pre-mRNA (By similarity).</text>
</comment>
<comment type="subcellular location">
    <subcellularLocation>
        <location evidence="1">Nucleus</location>
    </subcellularLocation>
    <subcellularLocation>
        <location evidence="1">Cytoplasm</location>
    </subcellularLocation>
</comment>
<comment type="similarity">
    <text evidence="4">Belongs to the CELF/BRUNOL family.</text>
</comment>